<sequence length="336" mass="37341">MQKMRTLGEFIVEKQHDFPHASGELSSLLASIRLAAKIVNREINKAGLADIIGASGNDNIQGEEQQKLDLYANEKFKAALEARDQVCGVASEEEDEAVAFSKELNKNAKYVVLMDPLDGSSNIDVNVSVGTIFSIYRRVSPVGTPPTQEDFLQPGNKQVAAGYVIYGSSTMLVYTTGNGVNGFTYDPSLGTFYLSHENMRIPENGKIYSINEGNYIRFPTGVKKYIKFCQENVPEEGRPYTSRYIGSLVADFHRNLLKGGIYLYPSTQSHPNGKLRLLYECNPMAFLIEQAGGLASDGARRIMDIKPTELHQRVPFFVGSKNMVHKVETFLETYPD</sequence>
<dbReference type="EC" id="3.1.3.11" evidence="1"/>
<dbReference type="EMBL" id="AE003852">
    <property type="protein sequence ID" value="AAF95685.1"/>
    <property type="molecule type" value="Genomic_DNA"/>
</dbReference>
<dbReference type="PIR" id="B82064">
    <property type="entry name" value="B82064"/>
</dbReference>
<dbReference type="RefSeq" id="NP_232172.1">
    <property type="nucleotide sequence ID" value="NC_002505.1"/>
</dbReference>
<dbReference type="RefSeq" id="WP_001171118.1">
    <property type="nucleotide sequence ID" value="NZ_LT906614.1"/>
</dbReference>
<dbReference type="SMR" id="Q9KP35"/>
<dbReference type="STRING" id="243277.VC_2544"/>
<dbReference type="DNASU" id="2615561"/>
<dbReference type="EnsemblBacteria" id="AAF95685">
    <property type="protein sequence ID" value="AAF95685"/>
    <property type="gene ID" value="VC_2544"/>
</dbReference>
<dbReference type="GeneID" id="89513478"/>
<dbReference type="KEGG" id="vch:VC_2544"/>
<dbReference type="PATRIC" id="fig|243277.26.peg.2422"/>
<dbReference type="eggNOG" id="COG0158">
    <property type="taxonomic scope" value="Bacteria"/>
</dbReference>
<dbReference type="HOGENOM" id="CLU_039977_2_2_6"/>
<dbReference type="UniPathway" id="UPA00138"/>
<dbReference type="Proteomes" id="UP000000584">
    <property type="component" value="Chromosome 1"/>
</dbReference>
<dbReference type="GO" id="GO:0005737">
    <property type="term" value="C:cytoplasm"/>
    <property type="evidence" value="ECO:0000318"/>
    <property type="project" value="GO_Central"/>
</dbReference>
<dbReference type="GO" id="GO:0005829">
    <property type="term" value="C:cytosol"/>
    <property type="evidence" value="ECO:0000318"/>
    <property type="project" value="GO_Central"/>
</dbReference>
<dbReference type="GO" id="GO:0042132">
    <property type="term" value="F:fructose 1,6-bisphosphate 1-phosphatase activity"/>
    <property type="evidence" value="ECO:0000318"/>
    <property type="project" value="GO_Central"/>
</dbReference>
<dbReference type="GO" id="GO:0000287">
    <property type="term" value="F:magnesium ion binding"/>
    <property type="evidence" value="ECO:0007669"/>
    <property type="project" value="UniProtKB-UniRule"/>
</dbReference>
<dbReference type="GO" id="GO:0030388">
    <property type="term" value="P:fructose 1,6-bisphosphate metabolic process"/>
    <property type="evidence" value="ECO:0000318"/>
    <property type="project" value="GO_Central"/>
</dbReference>
<dbReference type="GO" id="GO:0006002">
    <property type="term" value="P:fructose 6-phosphate metabolic process"/>
    <property type="evidence" value="ECO:0000318"/>
    <property type="project" value="GO_Central"/>
</dbReference>
<dbReference type="GO" id="GO:0006000">
    <property type="term" value="P:fructose metabolic process"/>
    <property type="evidence" value="ECO:0000318"/>
    <property type="project" value="GO_Central"/>
</dbReference>
<dbReference type="GO" id="GO:0006094">
    <property type="term" value="P:gluconeogenesis"/>
    <property type="evidence" value="ECO:0000318"/>
    <property type="project" value="GO_Central"/>
</dbReference>
<dbReference type="CDD" id="cd00354">
    <property type="entry name" value="FBPase"/>
    <property type="match status" value="1"/>
</dbReference>
<dbReference type="FunFam" id="3.30.540.10:FF:000002">
    <property type="entry name" value="Fructose-1,6-bisphosphatase class 1"/>
    <property type="match status" value="1"/>
</dbReference>
<dbReference type="FunFam" id="3.40.190.80:FF:000001">
    <property type="entry name" value="Fructose-1,6-bisphosphatase class 1"/>
    <property type="match status" value="1"/>
</dbReference>
<dbReference type="Gene3D" id="3.40.190.80">
    <property type="match status" value="1"/>
</dbReference>
<dbReference type="Gene3D" id="3.30.540.10">
    <property type="entry name" value="Fructose-1,6-Bisphosphatase, subunit A, domain 1"/>
    <property type="match status" value="1"/>
</dbReference>
<dbReference type="HAMAP" id="MF_01855">
    <property type="entry name" value="FBPase_class1"/>
    <property type="match status" value="1"/>
</dbReference>
<dbReference type="InterPro" id="IPR044015">
    <property type="entry name" value="FBPase_C_dom"/>
</dbReference>
<dbReference type="InterPro" id="IPR000146">
    <property type="entry name" value="FBPase_class-1"/>
</dbReference>
<dbReference type="InterPro" id="IPR033391">
    <property type="entry name" value="FBPase_N"/>
</dbReference>
<dbReference type="InterPro" id="IPR028343">
    <property type="entry name" value="FBPtase"/>
</dbReference>
<dbReference type="InterPro" id="IPR020548">
    <property type="entry name" value="Fructose_bisphosphatase_AS"/>
</dbReference>
<dbReference type="NCBIfam" id="NF006778">
    <property type="entry name" value="PRK09293.1-1"/>
    <property type="match status" value="1"/>
</dbReference>
<dbReference type="NCBIfam" id="NF006779">
    <property type="entry name" value="PRK09293.1-3"/>
    <property type="match status" value="1"/>
</dbReference>
<dbReference type="PANTHER" id="PTHR11556">
    <property type="entry name" value="FRUCTOSE-1,6-BISPHOSPHATASE-RELATED"/>
    <property type="match status" value="1"/>
</dbReference>
<dbReference type="PANTHER" id="PTHR11556:SF35">
    <property type="entry name" value="SEDOHEPTULOSE-1,7-BISPHOSPHATASE, CHLOROPLASTIC"/>
    <property type="match status" value="1"/>
</dbReference>
<dbReference type="Pfam" id="PF00316">
    <property type="entry name" value="FBPase"/>
    <property type="match status" value="1"/>
</dbReference>
<dbReference type="Pfam" id="PF18913">
    <property type="entry name" value="FBPase_C"/>
    <property type="match status" value="1"/>
</dbReference>
<dbReference type="PIRSF" id="PIRSF500210">
    <property type="entry name" value="FBPtase"/>
    <property type="match status" value="1"/>
</dbReference>
<dbReference type="PIRSF" id="PIRSF000904">
    <property type="entry name" value="FBPtase_SBPase"/>
    <property type="match status" value="1"/>
</dbReference>
<dbReference type="PRINTS" id="PR00115">
    <property type="entry name" value="F16BPHPHTASE"/>
</dbReference>
<dbReference type="SUPFAM" id="SSF56655">
    <property type="entry name" value="Carbohydrate phosphatase"/>
    <property type="match status" value="1"/>
</dbReference>
<dbReference type="PROSITE" id="PS00124">
    <property type="entry name" value="FBPASE"/>
    <property type="match status" value="1"/>
</dbReference>
<comment type="catalytic activity">
    <reaction evidence="1">
        <text>beta-D-fructose 1,6-bisphosphate + H2O = beta-D-fructose 6-phosphate + phosphate</text>
        <dbReference type="Rhea" id="RHEA:11064"/>
        <dbReference type="ChEBI" id="CHEBI:15377"/>
        <dbReference type="ChEBI" id="CHEBI:32966"/>
        <dbReference type="ChEBI" id="CHEBI:43474"/>
        <dbReference type="ChEBI" id="CHEBI:57634"/>
        <dbReference type="EC" id="3.1.3.11"/>
    </reaction>
</comment>
<comment type="cofactor">
    <cofactor evidence="1">
        <name>Mg(2+)</name>
        <dbReference type="ChEBI" id="CHEBI:18420"/>
    </cofactor>
    <text evidence="1">Binds 2 magnesium ions per subunit.</text>
</comment>
<comment type="pathway">
    <text evidence="1">Carbohydrate biosynthesis; gluconeogenesis.</text>
</comment>
<comment type="subunit">
    <text evidence="1">Homotetramer.</text>
</comment>
<comment type="subcellular location">
    <subcellularLocation>
        <location evidence="1">Cytoplasm</location>
    </subcellularLocation>
</comment>
<comment type="similarity">
    <text evidence="1">Belongs to the FBPase class 1 family.</text>
</comment>
<evidence type="ECO:0000255" key="1">
    <source>
        <dbReference type="HAMAP-Rule" id="MF_01855"/>
    </source>
</evidence>
<protein>
    <recommendedName>
        <fullName evidence="1">Fructose-1,6-bisphosphatase class 1</fullName>
        <shortName evidence="1">FBPase class 1</shortName>
        <ecNumber evidence="1">3.1.3.11</ecNumber>
    </recommendedName>
    <alternativeName>
        <fullName evidence="1">D-fructose-1,6-bisphosphate 1-phosphohydrolase class 1</fullName>
    </alternativeName>
</protein>
<organism>
    <name type="scientific">Vibrio cholerae serotype O1 (strain ATCC 39315 / El Tor Inaba N16961)</name>
    <dbReference type="NCBI Taxonomy" id="243277"/>
    <lineage>
        <taxon>Bacteria</taxon>
        <taxon>Pseudomonadati</taxon>
        <taxon>Pseudomonadota</taxon>
        <taxon>Gammaproteobacteria</taxon>
        <taxon>Vibrionales</taxon>
        <taxon>Vibrionaceae</taxon>
        <taxon>Vibrio</taxon>
    </lineage>
</organism>
<feature type="chain" id="PRO_0000364738" description="Fructose-1,6-bisphosphatase class 1">
    <location>
        <begin position="1"/>
        <end position="336"/>
    </location>
</feature>
<feature type="binding site" evidence="1">
    <location>
        <position position="92"/>
    </location>
    <ligand>
        <name>Mg(2+)</name>
        <dbReference type="ChEBI" id="CHEBI:18420"/>
        <label>1</label>
    </ligand>
</feature>
<feature type="binding site" evidence="1">
    <location>
        <position position="115"/>
    </location>
    <ligand>
        <name>Mg(2+)</name>
        <dbReference type="ChEBI" id="CHEBI:18420"/>
        <label>1</label>
    </ligand>
</feature>
<feature type="binding site" evidence="1">
    <location>
        <position position="115"/>
    </location>
    <ligand>
        <name>Mg(2+)</name>
        <dbReference type="ChEBI" id="CHEBI:18420"/>
        <label>2</label>
    </ligand>
</feature>
<feature type="binding site" evidence="1">
    <location>
        <position position="117"/>
    </location>
    <ligand>
        <name>Mg(2+)</name>
        <dbReference type="ChEBI" id="CHEBI:18420"/>
        <label>1</label>
    </ligand>
</feature>
<feature type="binding site" evidence="1">
    <location>
        <begin position="118"/>
        <end position="121"/>
    </location>
    <ligand>
        <name>substrate</name>
    </ligand>
</feature>
<feature type="binding site" evidence="1">
    <location>
        <position position="118"/>
    </location>
    <ligand>
        <name>Mg(2+)</name>
        <dbReference type="ChEBI" id="CHEBI:18420"/>
        <label>2</label>
    </ligand>
</feature>
<feature type="binding site" evidence="1">
    <location>
        <position position="211"/>
    </location>
    <ligand>
        <name>substrate</name>
    </ligand>
</feature>
<feature type="binding site" evidence="1">
    <location>
        <position position="244"/>
    </location>
    <ligand>
        <name>substrate</name>
    </ligand>
</feature>
<feature type="binding site" evidence="1">
    <location>
        <begin position="262"/>
        <end position="264"/>
    </location>
    <ligand>
        <name>substrate</name>
    </ligand>
</feature>
<feature type="binding site" evidence="1">
    <location>
        <position position="274"/>
    </location>
    <ligand>
        <name>substrate</name>
    </ligand>
</feature>
<feature type="binding site" evidence="1">
    <location>
        <position position="280"/>
    </location>
    <ligand>
        <name>Mg(2+)</name>
        <dbReference type="ChEBI" id="CHEBI:18420"/>
        <label>2</label>
    </ligand>
</feature>
<proteinExistence type="inferred from homology"/>
<name>F16PA_VIBCH</name>
<keyword id="KW-0119">Carbohydrate metabolism</keyword>
<keyword id="KW-0963">Cytoplasm</keyword>
<keyword id="KW-0378">Hydrolase</keyword>
<keyword id="KW-0460">Magnesium</keyword>
<keyword id="KW-0479">Metal-binding</keyword>
<keyword id="KW-1185">Reference proteome</keyword>
<accession>Q9KP35</accession>
<reference key="1">
    <citation type="journal article" date="2000" name="Nature">
        <title>DNA sequence of both chromosomes of the cholera pathogen Vibrio cholerae.</title>
        <authorList>
            <person name="Heidelberg J.F."/>
            <person name="Eisen J.A."/>
            <person name="Nelson W.C."/>
            <person name="Clayton R.A."/>
            <person name="Gwinn M.L."/>
            <person name="Dodson R.J."/>
            <person name="Haft D.H."/>
            <person name="Hickey E.K."/>
            <person name="Peterson J.D."/>
            <person name="Umayam L.A."/>
            <person name="Gill S.R."/>
            <person name="Nelson K.E."/>
            <person name="Read T.D."/>
            <person name="Tettelin H."/>
            <person name="Richardson D.L."/>
            <person name="Ermolaeva M.D."/>
            <person name="Vamathevan J.J."/>
            <person name="Bass S."/>
            <person name="Qin H."/>
            <person name="Dragoi I."/>
            <person name="Sellers P."/>
            <person name="McDonald L.A."/>
            <person name="Utterback T.R."/>
            <person name="Fleischmann R.D."/>
            <person name="Nierman W.C."/>
            <person name="White O."/>
            <person name="Salzberg S.L."/>
            <person name="Smith H.O."/>
            <person name="Colwell R.R."/>
            <person name="Mekalanos J.J."/>
            <person name="Venter J.C."/>
            <person name="Fraser C.M."/>
        </authorList>
    </citation>
    <scope>NUCLEOTIDE SEQUENCE [LARGE SCALE GENOMIC DNA]</scope>
    <source>
        <strain>ATCC 39315 / El Tor Inaba N16961</strain>
    </source>
</reference>
<gene>
    <name evidence="1" type="primary">fbp</name>
    <name type="ordered locus">VC_2544</name>
</gene>